<organism>
    <name type="scientific">Streptococcus equi subsp. zooepidemicus (strain MGCS10565)</name>
    <dbReference type="NCBI Taxonomy" id="552526"/>
    <lineage>
        <taxon>Bacteria</taxon>
        <taxon>Bacillati</taxon>
        <taxon>Bacillota</taxon>
        <taxon>Bacilli</taxon>
        <taxon>Lactobacillales</taxon>
        <taxon>Streptococcaceae</taxon>
        <taxon>Streptococcus</taxon>
    </lineage>
</organism>
<accession>B4U0K6</accession>
<feature type="chain" id="PRO_1000095595" description="Histidine--tRNA ligase">
    <location>
        <begin position="1"/>
        <end position="426"/>
    </location>
</feature>
<comment type="catalytic activity">
    <reaction evidence="1">
        <text>tRNA(His) + L-histidine + ATP = L-histidyl-tRNA(His) + AMP + diphosphate + H(+)</text>
        <dbReference type="Rhea" id="RHEA:17313"/>
        <dbReference type="Rhea" id="RHEA-COMP:9665"/>
        <dbReference type="Rhea" id="RHEA-COMP:9689"/>
        <dbReference type="ChEBI" id="CHEBI:15378"/>
        <dbReference type="ChEBI" id="CHEBI:30616"/>
        <dbReference type="ChEBI" id="CHEBI:33019"/>
        <dbReference type="ChEBI" id="CHEBI:57595"/>
        <dbReference type="ChEBI" id="CHEBI:78442"/>
        <dbReference type="ChEBI" id="CHEBI:78527"/>
        <dbReference type="ChEBI" id="CHEBI:456215"/>
        <dbReference type="EC" id="6.1.1.21"/>
    </reaction>
</comment>
<comment type="subunit">
    <text evidence="1">Homodimer.</text>
</comment>
<comment type="subcellular location">
    <subcellularLocation>
        <location evidence="1">Cytoplasm</location>
    </subcellularLocation>
</comment>
<comment type="similarity">
    <text evidence="1">Belongs to the class-II aminoacyl-tRNA synthetase family.</text>
</comment>
<evidence type="ECO:0000255" key="1">
    <source>
        <dbReference type="HAMAP-Rule" id="MF_00127"/>
    </source>
</evidence>
<keyword id="KW-0030">Aminoacyl-tRNA synthetase</keyword>
<keyword id="KW-0067">ATP-binding</keyword>
<keyword id="KW-0963">Cytoplasm</keyword>
<keyword id="KW-0436">Ligase</keyword>
<keyword id="KW-0547">Nucleotide-binding</keyword>
<keyword id="KW-0648">Protein biosynthesis</keyword>
<reference key="1">
    <citation type="journal article" date="2008" name="PLoS ONE">
        <title>Genome sequence of a lancefield group C Streptococcus zooepidemicus strain causing epidemic nephritis: new information about an old disease.</title>
        <authorList>
            <person name="Beres S.B."/>
            <person name="Sesso R."/>
            <person name="Pinto S.W.L."/>
            <person name="Hoe N.P."/>
            <person name="Porcella S.F."/>
            <person name="Deleo F.R."/>
            <person name="Musser J.M."/>
        </authorList>
    </citation>
    <scope>NUCLEOTIDE SEQUENCE [LARGE SCALE GENOMIC DNA]</scope>
    <source>
        <strain>MGCS10565</strain>
    </source>
</reference>
<name>SYH_STREM</name>
<gene>
    <name evidence="1" type="primary">hisS</name>
    <name type="ordered locus">Sez_1893</name>
</gene>
<dbReference type="EC" id="6.1.1.21" evidence="1"/>
<dbReference type="EMBL" id="CP001129">
    <property type="protein sequence ID" value="ACG63215.1"/>
    <property type="molecule type" value="Genomic_DNA"/>
</dbReference>
<dbReference type="RefSeq" id="WP_012516459.1">
    <property type="nucleotide sequence ID" value="NC_011134.1"/>
</dbReference>
<dbReference type="SMR" id="B4U0K6"/>
<dbReference type="KEGG" id="sez:Sez_1893"/>
<dbReference type="HOGENOM" id="CLU_025113_1_1_9"/>
<dbReference type="Proteomes" id="UP000001873">
    <property type="component" value="Chromosome"/>
</dbReference>
<dbReference type="GO" id="GO:0005737">
    <property type="term" value="C:cytoplasm"/>
    <property type="evidence" value="ECO:0007669"/>
    <property type="project" value="UniProtKB-SubCell"/>
</dbReference>
<dbReference type="GO" id="GO:0005524">
    <property type="term" value="F:ATP binding"/>
    <property type="evidence" value="ECO:0007669"/>
    <property type="project" value="UniProtKB-UniRule"/>
</dbReference>
<dbReference type="GO" id="GO:0140096">
    <property type="term" value="F:catalytic activity, acting on a protein"/>
    <property type="evidence" value="ECO:0007669"/>
    <property type="project" value="UniProtKB-ARBA"/>
</dbReference>
<dbReference type="GO" id="GO:0004821">
    <property type="term" value="F:histidine-tRNA ligase activity"/>
    <property type="evidence" value="ECO:0007669"/>
    <property type="project" value="UniProtKB-UniRule"/>
</dbReference>
<dbReference type="GO" id="GO:0016740">
    <property type="term" value="F:transferase activity"/>
    <property type="evidence" value="ECO:0007669"/>
    <property type="project" value="UniProtKB-ARBA"/>
</dbReference>
<dbReference type="GO" id="GO:0006427">
    <property type="term" value="P:histidyl-tRNA aminoacylation"/>
    <property type="evidence" value="ECO:0007669"/>
    <property type="project" value="UniProtKB-UniRule"/>
</dbReference>
<dbReference type="CDD" id="cd00773">
    <property type="entry name" value="HisRS-like_core"/>
    <property type="match status" value="1"/>
</dbReference>
<dbReference type="CDD" id="cd00859">
    <property type="entry name" value="HisRS_anticodon"/>
    <property type="match status" value="1"/>
</dbReference>
<dbReference type="FunFam" id="3.30.930.10:FF:000005">
    <property type="entry name" value="Histidine--tRNA ligase"/>
    <property type="match status" value="1"/>
</dbReference>
<dbReference type="Gene3D" id="3.40.50.800">
    <property type="entry name" value="Anticodon-binding domain"/>
    <property type="match status" value="1"/>
</dbReference>
<dbReference type="Gene3D" id="3.30.930.10">
    <property type="entry name" value="Bira Bifunctional Protein, Domain 2"/>
    <property type="match status" value="1"/>
</dbReference>
<dbReference type="HAMAP" id="MF_00127">
    <property type="entry name" value="His_tRNA_synth"/>
    <property type="match status" value="1"/>
</dbReference>
<dbReference type="InterPro" id="IPR006195">
    <property type="entry name" value="aa-tRNA-synth_II"/>
</dbReference>
<dbReference type="InterPro" id="IPR045864">
    <property type="entry name" value="aa-tRNA-synth_II/BPL/LPL"/>
</dbReference>
<dbReference type="InterPro" id="IPR004154">
    <property type="entry name" value="Anticodon-bd"/>
</dbReference>
<dbReference type="InterPro" id="IPR036621">
    <property type="entry name" value="Anticodon-bd_dom_sf"/>
</dbReference>
<dbReference type="InterPro" id="IPR015807">
    <property type="entry name" value="His-tRNA-ligase"/>
</dbReference>
<dbReference type="InterPro" id="IPR041715">
    <property type="entry name" value="HisRS-like_core"/>
</dbReference>
<dbReference type="InterPro" id="IPR004516">
    <property type="entry name" value="HisRS/HisZ"/>
</dbReference>
<dbReference type="InterPro" id="IPR033656">
    <property type="entry name" value="HisRS_anticodon"/>
</dbReference>
<dbReference type="NCBIfam" id="TIGR00442">
    <property type="entry name" value="hisS"/>
    <property type="match status" value="1"/>
</dbReference>
<dbReference type="PANTHER" id="PTHR43707:SF1">
    <property type="entry name" value="HISTIDINE--TRNA LIGASE, MITOCHONDRIAL-RELATED"/>
    <property type="match status" value="1"/>
</dbReference>
<dbReference type="PANTHER" id="PTHR43707">
    <property type="entry name" value="HISTIDYL-TRNA SYNTHETASE"/>
    <property type="match status" value="1"/>
</dbReference>
<dbReference type="Pfam" id="PF03129">
    <property type="entry name" value="HGTP_anticodon"/>
    <property type="match status" value="1"/>
</dbReference>
<dbReference type="Pfam" id="PF13393">
    <property type="entry name" value="tRNA-synt_His"/>
    <property type="match status" value="1"/>
</dbReference>
<dbReference type="PIRSF" id="PIRSF001549">
    <property type="entry name" value="His-tRNA_synth"/>
    <property type="match status" value="1"/>
</dbReference>
<dbReference type="SUPFAM" id="SSF52954">
    <property type="entry name" value="Class II aaRS ABD-related"/>
    <property type="match status" value="1"/>
</dbReference>
<dbReference type="SUPFAM" id="SSF55681">
    <property type="entry name" value="Class II aaRS and biotin synthetases"/>
    <property type="match status" value="1"/>
</dbReference>
<dbReference type="PROSITE" id="PS50862">
    <property type="entry name" value="AA_TRNA_LIGASE_II"/>
    <property type="match status" value="1"/>
</dbReference>
<protein>
    <recommendedName>
        <fullName evidence="1">Histidine--tRNA ligase</fullName>
        <ecNumber evidence="1">6.1.1.21</ecNumber>
    </recommendedName>
    <alternativeName>
        <fullName evidence="1">Histidyl-tRNA synthetase</fullName>
        <shortName evidence="1">HisRS</shortName>
    </alternativeName>
</protein>
<proteinExistence type="inferred from homology"/>
<sequence>MKLQKPKGTQDILSVAAAKWQYVEGVARETFKQYHYGEIRTPMFEHYEVISRSVGDTTDIVTKEMYDFYDKGDRHITLRPEGTAPVVRSYVENKLFAPEVQKPVKLYYIGSMFRYERPQAGRLREFHQIGVECFGSANPATDVETIAMAYHLFERLGIKGVTLHLNSLGNAASRAAYRQALIDYLSPMRETLSKDSQRRLDENPLRVLDSKEKEDKIAVANVPSILDYLDEESQAHFDAVRSMLEALAIPYVIDTNMVRGLDYYNHTIFEFITEVDQSELTICAGGRYDGLVEYFGGPATPGFGFGLGLERLLLILDKQGVELPVEEGLDVYIAVLGADANVAALALTQAIRRQGFTVERDYLGRKIKAQFKSADTFKAKVVITLGESEIKAGQAVLKHNQTRQEMTVSFDQIQTDFASIFAECVQ</sequence>